<proteinExistence type="evidence at protein level"/>
<comment type="function">
    <text evidence="1">Catalyzes the final step of fatty acid oxidation in which acetyl-CoA is released and the CoA ester of a fatty acid two carbons shorter is formed. Involved in the aerobic and anaerobic degradation of long-chain fatty acids (By similarity).</text>
</comment>
<comment type="catalytic activity">
    <reaction evidence="1">
        <text>an acyl-CoA + acetyl-CoA = a 3-oxoacyl-CoA + CoA</text>
        <dbReference type="Rhea" id="RHEA:21564"/>
        <dbReference type="ChEBI" id="CHEBI:57287"/>
        <dbReference type="ChEBI" id="CHEBI:57288"/>
        <dbReference type="ChEBI" id="CHEBI:58342"/>
        <dbReference type="ChEBI" id="CHEBI:90726"/>
        <dbReference type="EC" id="2.3.1.16"/>
    </reaction>
</comment>
<comment type="pathway">
    <text evidence="1">Lipid metabolism; fatty acid beta-oxidation.</text>
</comment>
<comment type="subunit">
    <text evidence="1">Heterotetramer of two alpha chains (FadB) and two beta chains (FadA).</text>
</comment>
<comment type="subcellular location">
    <subcellularLocation>
        <location evidence="1">Cytoplasm</location>
    </subcellularLocation>
</comment>
<comment type="similarity">
    <text evidence="1">Belongs to the thiolase-like superfamily. Thiolase family.</text>
</comment>
<organism>
    <name type="scientific">Salmonella typhimurium (strain LT2 / SGSC1412 / ATCC 700720)</name>
    <dbReference type="NCBI Taxonomy" id="99287"/>
    <lineage>
        <taxon>Bacteria</taxon>
        <taxon>Pseudomonadati</taxon>
        <taxon>Pseudomonadota</taxon>
        <taxon>Gammaproteobacteria</taxon>
        <taxon>Enterobacterales</taxon>
        <taxon>Enterobacteriaceae</taxon>
        <taxon>Salmonella</taxon>
    </lineage>
</organism>
<sequence>MEQVVIVDAIRTPMGRSKGGAFRNVRAEDLSAHLMRSLLARNPSLTAATLDDIYWGCVQQTLEQGFNIARNAALLAEIPHSVPAVTVNRLCGSSMQALHDAARMIMTGDAQVCLVGGVEHMGHVPMSHGVDFHPGLSRNVAKAAGMMGLTAEMLSRLHGISREMQDQFAARSHARAWAATQSGAFKTEIIPTGGHDADGVLKQFNYDEVIRPETTVEALSTLRPAFDPVSGTVTAGTSSALSDGAAAMLVMSESRARELGLKPRARIRSMAVVGCDPSIMGYGPVPASKLALKKAGLSASDIDVFEMNEAFAAQILPCIKDLGLMEQIDEKINLNGGAIALGHPLGCSGARISTTLINLMERKDAQFGLATMCIGLGQGIATVFERV</sequence>
<dbReference type="EC" id="2.3.1.16" evidence="1"/>
<dbReference type="EMBL" id="AF233324">
    <property type="protein sequence ID" value="AAF33416.1"/>
    <property type="molecule type" value="Genomic_DNA"/>
</dbReference>
<dbReference type="EMBL" id="AE006468">
    <property type="protein sequence ID" value="AAL22826.1"/>
    <property type="molecule type" value="Genomic_DNA"/>
</dbReference>
<dbReference type="RefSeq" id="NP_462867.1">
    <property type="nucleotide sequence ID" value="NC_003197.2"/>
</dbReference>
<dbReference type="RefSeq" id="WP_000438778.1">
    <property type="nucleotide sequence ID" value="NC_003197.2"/>
</dbReference>
<dbReference type="PDB" id="3GOA">
    <property type="method" value="X-ray"/>
    <property type="resolution" value="1.70 A"/>
    <property type="chains" value="A/B=1-387"/>
</dbReference>
<dbReference type="PDBsum" id="3GOA"/>
<dbReference type="SMR" id="P0A2H7"/>
<dbReference type="STRING" id="99287.STM3982"/>
<dbReference type="PaxDb" id="99287-STM3982"/>
<dbReference type="GeneID" id="1255508"/>
<dbReference type="KEGG" id="stm:STM3982"/>
<dbReference type="PATRIC" id="fig|99287.12.peg.4201"/>
<dbReference type="HOGENOM" id="CLU_031026_2_3_6"/>
<dbReference type="OMA" id="RWCASSM"/>
<dbReference type="PhylomeDB" id="P0A2H7"/>
<dbReference type="BioCyc" id="SENT99287:STM3982-MONOMER"/>
<dbReference type="UniPathway" id="UPA00659"/>
<dbReference type="EvolutionaryTrace" id="P0A2H7"/>
<dbReference type="Proteomes" id="UP000001014">
    <property type="component" value="Chromosome"/>
</dbReference>
<dbReference type="GO" id="GO:0005737">
    <property type="term" value="C:cytoplasm"/>
    <property type="evidence" value="ECO:0007669"/>
    <property type="project" value="UniProtKB-SubCell"/>
</dbReference>
<dbReference type="GO" id="GO:0003988">
    <property type="term" value="F:acetyl-CoA C-acyltransferase activity"/>
    <property type="evidence" value="ECO:0000318"/>
    <property type="project" value="GO_Central"/>
</dbReference>
<dbReference type="GO" id="GO:0006635">
    <property type="term" value="P:fatty acid beta-oxidation"/>
    <property type="evidence" value="ECO:0000318"/>
    <property type="project" value="GO_Central"/>
</dbReference>
<dbReference type="GO" id="GO:0010124">
    <property type="term" value="P:phenylacetate catabolic process"/>
    <property type="evidence" value="ECO:0000318"/>
    <property type="project" value="GO_Central"/>
</dbReference>
<dbReference type="CDD" id="cd00751">
    <property type="entry name" value="thiolase"/>
    <property type="match status" value="1"/>
</dbReference>
<dbReference type="FunFam" id="3.40.47.10:FF:000010">
    <property type="entry name" value="Acetyl-CoA acetyltransferase (Thiolase)"/>
    <property type="match status" value="1"/>
</dbReference>
<dbReference type="Gene3D" id="3.40.47.10">
    <property type="match status" value="2"/>
</dbReference>
<dbReference type="HAMAP" id="MF_01620">
    <property type="entry name" value="FadA"/>
    <property type="match status" value="1"/>
</dbReference>
<dbReference type="InterPro" id="IPR012805">
    <property type="entry name" value="FadA"/>
</dbReference>
<dbReference type="InterPro" id="IPR002155">
    <property type="entry name" value="Thiolase"/>
</dbReference>
<dbReference type="InterPro" id="IPR016039">
    <property type="entry name" value="Thiolase-like"/>
</dbReference>
<dbReference type="InterPro" id="IPR050215">
    <property type="entry name" value="Thiolase-like_sf_Thiolase"/>
</dbReference>
<dbReference type="InterPro" id="IPR020615">
    <property type="entry name" value="Thiolase_acyl_enz_int_AS"/>
</dbReference>
<dbReference type="InterPro" id="IPR020610">
    <property type="entry name" value="Thiolase_AS"/>
</dbReference>
<dbReference type="InterPro" id="IPR020617">
    <property type="entry name" value="Thiolase_C"/>
</dbReference>
<dbReference type="InterPro" id="IPR020613">
    <property type="entry name" value="Thiolase_CS"/>
</dbReference>
<dbReference type="InterPro" id="IPR020616">
    <property type="entry name" value="Thiolase_N"/>
</dbReference>
<dbReference type="NCBIfam" id="TIGR01930">
    <property type="entry name" value="AcCoA-C-Actrans"/>
    <property type="match status" value="1"/>
</dbReference>
<dbReference type="NCBIfam" id="TIGR02445">
    <property type="entry name" value="fadA"/>
    <property type="match status" value="1"/>
</dbReference>
<dbReference type="NCBIfam" id="NF006510">
    <property type="entry name" value="PRK08947.1"/>
    <property type="match status" value="1"/>
</dbReference>
<dbReference type="PANTHER" id="PTHR43853:SF11">
    <property type="entry name" value="3-KETOACYL-COA THIOLASE FADA"/>
    <property type="match status" value="1"/>
</dbReference>
<dbReference type="PANTHER" id="PTHR43853">
    <property type="entry name" value="3-KETOACYL-COA THIOLASE, PEROXISOMAL"/>
    <property type="match status" value="1"/>
</dbReference>
<dbReference type="Pfam" id="PF02803">
    <property type="entry name" value="Thiolase_C"/>
    <property type="match status" value="1"/>
</dbReference>
<dbReference type="Pfam" id="PF00108">
    <property type="entry name" value="Thiolase_N"/>
    <property type="match status" value="1"/>
</dbReference>
<dbReference type="PIRSF" id="PIRSF000429">
    <property type="entry name" value="Ac-CoA_Ac_transf"/>
    <property type="match status" value="1"/>
</dbReference>
<dbReference type="SUPFAM" id="SSF53901">
    <property type="entry name" value="Thiolase-like"/>
    <property type="match status" value="2"/>
</dbReference>
<dbReference type="PROSITE" id="PS00098">
    <property type="entry name" value="THIOLASE_1"/>
    <property type="match status" value="1"/>
</dbReference>
<dbReference type="PROSITE" id="PS00737">
    <property type="entry name" value="THIOLASE_2"/>
    <property type="match status" value="1"/>
</dbReference>
<dbReference type="PROSITE" id="PS00099">
    <property type="entry name" value="THIOLASE_3"/>
    <property type="match status" value="1"/>
</dbReference>
<evidence type="ECO:0000255" key="1">
    <source>
        <dbReference type="HAMAP-Rule" id="MF_01620"/>
    </source>
</evidence>
<evidence type="ECO:0007829" key="2">
    <source>
        <dbReference type="PDB" id="3GOA"/>
    </source>
</evidence>
<reference key="1">
    <citation type="journal article" date="2001" name="Nature">
        <title>Complete genome sequence of Salmonella enterica serovar Typhimurium LT2.</title>
        <authorList>
            <person name="McClelland M."/>
            <person name="Sanderson K.E."/>
            <person name="Spieth J."/>
            <person name="Clifton S.W."/>
            <person name="Latreille P."/>
            <person name="Courtney L."/>
            <person name="Porwollik S."/>
            <person name="Ali J."/>
            <person name="Dante M."/>
            <person name="Du F."/>
            <person name="Hou S."/>
            <person name="Layman D."/>
            <person name="Leonard S."/>
            <person name="Nguyen C."/>
            <person name="Scott K."/>
            <person name="Holmes A."/>
            <person name="Grewal N."/>
            <person name="Mulvaney E."/>
            <person name="Ryan E."/>
            <person name="Sun H."/>
            <person name="Florea L."/>
            <person name="Miller W."/>
            <person name="Stoneking T."/>
            <person name="Nhan M."/>
            <person name="Waterston R."/>
            <person name="Wilson R.K."/>
        </authorList>
    </citation>
    <scope>NUCLEOTIDE SEQUENCE [LARGE SCALE GENOMIC DNA]</scope>
    <source>
        <strain>LT2 / SGSC1412 / ATCC 700720</strain>
    </source>
</reference>
<feature type="chain" id="PRO_0000206391" description="3-ketoacyl-CoA thiolase">
    <location>
        <begin position="1"/>
        <end position="387"/>
    </location>
</feature>
<feature type="active site" description="Acyl-thioester intermediate" evidence="1">
    <location>
        <position position="91"/>
    </location>
</feature>
<feature type="active site" description="Proton acceptor" evidence="1">
    <location>
        <position position="343"/>
    </location>
</feature>
<feature type="active site" description="Proton acceptor" evidence="1">
    <location>
        <position position="373"/>
    </location>
</feature>
<feature type="strand" evidence="2">
    <location>
        <begin position="4"/>
        <end position="11"/>
    </location>
</feature>
<feature type="turn" evidence="2">
    <location>
        <begin position="17"/>
        <end position="19"/>
    </location>
</feature>
<feature type="turn" evidence="2">
    <location>
        <begin position="21"/>
        <end position="24"/>
    </location>
</feature>
<feature type="helix" evidence="2">
    <location>
        <begin position="27"/>
        <end position="41"/>
    </location>
</feature>
<feature type="helix" evidence="2">
    <location>
        <begin position="47"/>
        <end position="49"/>
    </location>
</feature>
<feature type="strand" evidence="2">
    <location>
        <begin position="52"/>
        <end position="56"/>
    </location>
</feature>
<feature type="turn" evidence="2">
    <location>
        <begin position="63"/>
        <end position="67"/>
    </location>
</feature>
<feature type="helix" evidence="2">
    <location>
        <begin position="68"/>
        <end position="75"/>
    </location>
</feature>
<feature type="strand" evidence="2">
    <location>
        <begin position="85"/>
        <end position="88"/>
    </location>
</feature>
<feature type="helix" evidence="2">
    <location>
        <begin position="90"/>
        <end position="92"/>
    </location>
</feature>
<feature type="helix" evidence="2">
    <location>
        <begin position="93"/>
        <end position="106"/>
    </location>
</feature>
<feature type="strand" evidence="2">
    <location>
        <begin position="111"/>
        <end position="119"/>
    </location>
</feature>
<feature type="turn" evidence="2">
    <location>
        <begin position="121"/>
        <end position="123"/>
    </location>
</feature>
<feature type="turn" evidence="2">
    <location>
        <begin position="126"/>
        <end position="129"/>
    </location>
</feature>
<feature type="helix" evidence="2">
    <location>
        <begin position="148"/>
        <end position="157"/>
    </location>
</feature>
<feature type="helix" evidence="2">
    <location>
        <begin position="162"/>
        <end position="182"/>
    </location>
</feature>
<feature type="turn" evidence="2">
    <location>
        <begin position="183"/>
        <end position="188"/>
    </location>
</feature>
<feature type="strand" evidence="2">
    <location>
        <begin position="192"/>
        <end position="195"/>
    </location>
</feature>
<feature type="strand" evidence="2">
    <location>
        <begin position="201"/>
        <end position="204"/>
    </location>
</feature>
<feature type="helix" evidence="2">
    <location>
        <begin position="216"/>
        <end position="219"/>
    </location>
</feature>
<feature type="turn" evidence="2">
    <location>
        <begin position="228"/>
        <end position="230"/>
    </location>
</feature>
<feature type="helix" evidence="2">
    <location>
        <begin position="235"/>
        <end position="237"/>
    </location>
</feature>
<feature type="strand" evidence="2">
    <location>
        <begin position="242"/>
        <end position="252"/>
    </location>
</feature>
<feature type="helix" evidence="2">
    <location>
        <begin position="253"/>
        <end position="258"/>
    </location>
</feature>
<feature type="strand" evidence="2">
    <location>
        <begin position="265"/>
        <end position="274"/>
    </location>
</feature>
<feature type="helix" evidence="2">
    <location>
        <begin position="284"/>
        <end position="295"/>
    </location>
</feature>
<feature type="helix" evidence="2">
    <location>
        <begin position="299"/>
        <end position="301"/>
    </location>
</feature>
<feature type="strand" evidence="2">
    <location>
        <begin position="303"/>
        <end position="307"/>
    </location>
</feature>
<feature type="helix" evidence="2">
    <location>
        <begin position="312"/>
        <end position="321"/>
    </location>
</feature>
<feature type="helix" evidence="2">
    <location>
        <begin position="325"/>
        <end position="327"/>
    </location>
</feature>
<feature type="helix" evidence="2">
    <location>
        <begin position="328"/>
        <end position="331"/>
    </location>
</feature>
<feature type="helix" evidence="2">
    <location>
        <begin position="338"/>
        <end position="341"/>
    </location>
</feature>
<feature type="helix" evidence="2">
    <location>
        <begin position="345"/>
        <end position="362"/>
    </location>
</feature>
<feature type="strand" evidence="2">
    <location>
        <begin position="366"/>
        <end position="374"/>
    </location>
</feature>
<feature type="turn" evidence="2">
    <location>
        <begin position="375"/>
        <end position="377"/>
    </location>
</feature>
<feature type="strand" evidence="2">
    <location>
        <begin position="378"/>
        <end position="385"/>
    </location>
</feature>
<protein>
    <recommendedName>
        <fullName evidence="1">3-ketoacyl-CoA thiolase</fullName>
        <ecNumber evidence="1">2.3.1.16</ecNumber>
    </recommendedName>
    <alternativeName>
        <fullName evidence="1">Acetyl-CoA acyltransferase</fullName>
    </alternativeName>
    <alternativeName>
        <fullName evidence="1">Beta-ketothiolase</fullName>
    </alternativeName>
    <alternativeName>
        <fullName evidence="1">Fatty acid oxidation complex subunit beta</fullName>
    </alternativeName>
</protein>
<gene>
    <name evidence="1" type="primary">fadA</name>
    <name type="ordered locus">STM3982</name>
    <name type="ORF">STMD1.7</name>
</gene>
<name>FADA_SALTY</name>
<keyword id="KW-0002">3D-structure</keyword>
<keyword id="KW-0012">Acyltransferase</keyword>
<keyword id="KW-0963">Cytoplasm</keyword>
<keyword id="KW-0276">Fatty acid metabolism</keyword>
<keyword id="KW-0442">Lipid degradation</keyword>
<keyword id="KW-0443">Lipid metabolism</keyword>
<keyword id="KW-1185">Reference proteome</keyword>
<keyword id="KW-0808">Transferase</keyword>
<accession>P0A2H7</accession>
<accession>Q9L6L6</accession>